<keyword id="KW-0560">Oxidoreductase</keyword>
<keyword id="KW-0663">Pyridoxal phosphate</keyword>
<gene>
    <name evidence="1" type="primary">gcvP</name>
    <name type="ordered locus">XCV1243</name>
</gene>
<name>GCSP_XANE5</name>
<sequence>MSQTPSSLRDLEHHSAFVERHIGPNDAEIAQMLDVVGHACLDALTDAIVPGNIKSPAPLALPEAITEEEALAKIRAIADKNTVFRNFIGQGYYGTHTPKVILRNILENPAWYTAYTPYQAEISQGRMEALINFQTLCADLTGMQIANASLLDEATAAAEAMTLAKRSAKSRSNTFFVHDAVHPQTLELLRTRAEPLDIVLRVGTPEEALQAECFGVLLQYPDSFGHIGDHAALADAVHAQGGLVAVATDLLALTLIAAPGEWGADIVVGNSQRFGVPFGFGGPHAAFMACRDAYKRSMPGRLIGVSIDAAGNPAYRLTLQTREQHIRREKATSNICTAQVLLAVMASMYAVYHGPDGLTRIARRTHRLAAILAAALRSAGVTVGERFFDTLHVKAIDANAIHARARAAGINLRAIDSEAVGISLDETSTRADVVALAALFGAQADVDALDAATADALPQGLLRTTPFLTHPVFNTHHSEHELLRYMRSLADKDLAMDRTMIPLGSCTMKLNATAEMIPVTWPEFGAIHPLAPAEQSAGYAQLIDELEAMLVECTGYDAVSLQPNSGAQGEYAGLLAIRAYHRSRGEAHRDICLIPESAHGTNPASAQMCGMTVVVTKCDANGNVDVDDIRAKAEKYSDRLAALMITYPSTHGVFEEDVVAICEAVHAHGGQVYTDGANMNALVGVAKPGKWGSDVSHLNLHKTFCIPHGGGGPGVGPCAVKSHLAPYLPKTLGGEGDVGMVSAASYGSASILPISWMYVTMMGSAGLRKATQVALLNANYIAKRLAPHYKTLYTGRNGLVAHECILDVRPLEKTSGIGAEDIAKRLIDFGFHAPTLSFPVAGTLMVEPTESESQHELDRFIDAMIQIREEIRAIEDGRLDREDNPLKHAPHTATQVSASEWTHAYPRELAAFPLPSLKQQKYWPPVARVDNVYGDKNVMCACIPVDAYKEDVEA</sequence>
<dbReference type="EC" id="1.4.4.2" evidence="1"/>
<dbReference type="EMBL" id="AM039952">
    <property type="protein sequence ID" value="CAJ22874.1"/>
    <property type="molecule type" value="Genomic_DNA"/>
</dbReference>
<dbReference type="SMR" id="Q3BW89"/>
<dbReference type="STRING" id="456327.BJD11_16410"/>
<dbReference type="KEGG" id="xcv:XCV1243"/>
<dbReference type="eggNOG" id="COG0403">
    <property type="taxonomic scope" value="Bacteria"/>
</dbReference>
<dbReference type="eggNOG" id="COG1003">
    <property type="taxonomic scope" value="Bacteria"/>
</dbReference>
<dbReference type="HOGENOM" id="CLU_004620_3_2_6"/>
<dbReference type="Proteomes" id="UP000007069">
    <property type="component" value="Chromosome"/>
</dbReference>
<dbReference type="GO" id="GO:0005829">
    <property type="term" value="C:cytosol"/>
    <property type="evidence" value="ECO:0007669"/>
    <property type="project" value="TreeGrafter"/>
</dbReference>
<dbReference type="GO" id="GO:0005960">
    <property type="term" value="C:glycine cleavage complex"/>
    <property type="evidence" value="ECO:0007669"/>
    <property type="project" value="TreeGrafter"/>
</dbReference>
<dbReference type="GO" id="GO:0016594">
    <property type="term" value="F:glycine binding"/>
    <property type="evidence" value="ECO:0007669"/>
    <property type="project" value="TreeGrafter"/>
</dbReference>
<dbReference type="GO" id="GO:0004375">
    <property type="term" value="F:glycine dehydrogenase (decarboxylating) activity"/>
    <property type="evidence" value="ECO:0007669"/>
    <property type="project" value="UniProtKB-EC"/>
</dbReference>
<dbReference type="GO" id="GO:0030170">
    <property type="term" value="F:pyridoxal phosphate binding"/>
    <property type="evidence" value="ECO:0007669"/>
    <property type="project" value="TreeGrafter"/>
</dbReference>
<dbReference type="GO" id="GO:0019464">
    <property type="term" value="P:glycine decarboxylation via glycine cleavage system"/>
    <property type="evidence" value="ECO:0007669"/>
    <property type="project" value="UniProtKB-UniRule"/>
</dbReference>
<dbReference type="CDD" id="cd00613">
    <property type="entry name" value="GDC-P"/>
    <property type="match status" value="2"/>
</dbReference>
<dbReference type="FunFam" id="3.40.640.10:FF:000005">
    <property type="entry name" value="Glycine dehydrogenase (decarboxylating), mitochondrial"/>
    <property type="match status" value="1"/>
</dbReference>
<dbReference type="FunFam" id="3.90.1150.10:FF:000007">
    <property type="entry name" value="Glycine dehydrogenase (decarboxylating), mitochondrial"/>
    <property type="match status" value="1"/>
</dbReference>
<dbReference type="FunFam" id="3.40.640.10:FF:000007">
    <property type="entry name" value="glycine dehydrogenase (Decarboxylating), mitochondrial"/>
    <property type="match status" value="1"/>
</dbReference>
<dbReference type="Gene3D" id="3.90.1150.10">
    <property type="entry name" value="Aspartate Aminotransferase, domain 1"/>
    <property type="match status" value="2"/>
</dbReference>
<dbReference type="Gene3D" id="3.40.640.10">
    <property type="entry name" value="Type I PLP-dependent aspartate aminotransferase-like (Major domain)"/>
    <property type="match status" value="2"/>
</dbReference>
<dbReference type="HAMAP" id="MF_00711">
    <property type="entry name" value="GcvP"/>
    <property type="match status" value="1"/>
</dbReference>
<dbReference type="InterPro" id="IPR003437">
    <property type="entry name" value="GcvP"/>
</dbReference>
<dbReference type="InterPro" id="IPR049316">
    <property type="entry name" value="GDC-P_C"/>
</dbReference>
<dbReference type="InterPro" id="IPR049315">
    <property type="entry name" value="GDC-P_N"/>
</dbReference>
<dbReference type="InterPro" id="IPR020581">
    <property type="entry name" value="GDC_P"/>
</dbReference>
<dbReference type="InterPro" id="IPR015424">
    <property type="entry name" value="PyrdxlP-dep_Trfase"/>
</dbReference>
<dbReference type="InterPro" id="IPR015421">
    <property type="entry name" value="PyrdxlP-dep_Trfase_major"/>
</dbReference>
<dbReference type="InterPro" id="IPR015422">
    <property type="entry name" value="PyrdxlP-dep_Trfase_small"/>
</dbReference>
<dbReference type="NCBIfam" id="TIGR00461">
    <property type="entry name" value="gcvP"/>
    <property type="match status" value="1"/>
</dbReference>
<dbReference type="NCBIfam" id="NF003346">
    <property type="entry name" value="PRK04366.1"/>
    <property type="match status" value="1"/>
</dbReference>
<dbReference type="PANTHER" id="PTHR11773:SF1">
    <property type="entry name" value="GLYCINE DEHYDROGENASE (DECARBOXYLATING), MITOCHONDRIAL"/>
    <property type="match status" value="1"/>
</dbReference>
<dbReference type="PANTHER" id="PTHR11773">
    <property type="entry name" value="GLYCINE DEHYDROGENASE, DECARBOXYLATING"/>
    <property type="match status" value="1"/>
</dbReference>
<dbReference type="Pfam" id="PF21478">
    <property type="entry name" value="GcvP2_C"/>
    <property type="match status" value="1"/>
</dbReference>
<dbReference type="Pfam" id="PF02347">
    <property type="entry name" value="GDC-P"/>
    <property type="match status" value="2"/>
</dbReference>
<dbReference type="SUPFAM" id="SSF53383">
    <property type="entry name" value="PLP-dependent transferases"/>
    <property type="match status" value="2"/>
</dbReference>
<proteinExistence type="inferred from homology"/>
<organism>
    <name type="scientific">Xanthomonas euvesicatoria pv. vesicatoria (strain 85-10)</name>
    <name type="common">Xanthomonas campestris pv. vesicatoria</name>
    <dbReference type="NCBI Taxonomy" id="316273"/>
    <lineage>
        <taxon>Bacteria</taxon>
        <taxon>Pseudomonadati</taxon>
        <taxon>Pseudomonadota</taxon>
        <taxon>Gammaproteobacteria</taxon>
        <taxon>Lysobacterales</taxon>
        <taxon>Lysobacteraceae</taxon>
        <taxon>Xanthomonas</taxon>
    </lineage>
</organism>
<evidence type="ECO:0000255" key="1">
    <source>
        <dbReference type="HAMAP-Rule" id="MF_00711"/>
    </source>
</evidence>
<comment type="function">
    <text evidence="1">The glycine cleavage system catalyzes the degradation of glycine. The P protein binds the alpha-amino group of glycine through its pyridoxal phosphate cofactor; CO(2) is released and the remaining methylamine moiety is then transferred to the lipoamide cofactor of the H protein.</text>
</comment>
<comment type="catalytic activity">
    <reaction evidence="1">
        <text>N(6)-[(R)-lipoyl]-L-lysyl-[glycine-cleavage complex H protein] + glycine + H(+) = N(6)-[(R)-S(8)-aminomethyldihydrolipoyl]-L-lysyl-[glycine-cleavage complex H protein] + CO2</text>
        <dbReference type="Rhea" id="RHEA:24304"/>
        <dbReference type="Rhea" id="RHEA-COMP:10494"/>
        <dbReference type="Rhea" id="RHEA-COMP:10495"/>
        <dbReference type="ChEBI" id="CHEBI:15378"/>
        <dbReference type="ChEBI" id="CHEBI:16526"/>
        <dbReference type="ChEBI" id="CHEBI:57305"/>
        <dbReference type="ChEBI" id="CHEBI:83099"/>
        <dbReference type="ChEBI" id="CHEBI:83143"/>
        <dbReference type="EC" id="1.4.4.2"/>
    </reaction>
</comment>
<comment type="cofactor">
    <cofactor evidence="1">
        <name>pyridoxal 5'-phosphate</name>
        <dbReference type="ChEBI" id="CHEBI:597326"/>
    </cofactor>
</comment>
<comment type="subunit">
    <text evidence="1">The glycine cleavage system is composed of four proteins: P, T, L and H.</text>
</comment>
<comment type="similarity">
    <text evidence="1">Belongs to the GcvP family.</text>
</comment>
<accession>Q3BW89</accession>
<reference key="1">
    <citation type="journal article" date="2005" name="J. Bacteriol.">
        <title>Insights into genome plasticity and pathogenicity of the plant pathogenic Bacterium Xanthomonas campestris pv. vesicatoria revealed by the complete genome sequence.</title>
        <authorList>
            <person name="Thieme F."/>
            <person name="Koebnik R."/>
            <person name="Bekel T."/>
            <person name="Berger C."/>
            <person name="Boch J."/>
            <person name="Buettner D."/>
            <person name="Caldana C."/>
            <person name="Gaigalat L."/>
            <person name="Goesmann A."/>
            <person name="Kay S."/>
            <person name="Kirchner O."/>
            <person name="Lanz C."/>
            <person name="Linke B."/>
            <person name="McHardy A.C."/>
            <person name="Meyer F."/>
            <person name="Mittenhuber G."/>
            <person name="Nies D.H."/>
            <person name="Niesbach-Kloesgen U."/>
            <person name="Patschkowski T."/>
            <person name="Rueckert C."/>
            <person name="Rupp O."/>
            <person name="Schneiker S."/>
            <person name="Schuster S.C."/>
            <person name="Vorhoelter F.J."/>
            <person name="Weber E."/>
            <person name="Puehler A."/>
            <person name="Bonas U."/>
            <person name="Bartels D."/>
            <person name="Kaiser O."/>
        </authorList>
    </citation>
    <scope>NUCLEOTIDE SEQUENCE [LARGE SCALE GENOMIC DNA]</scope>
    <source>
        <strain>85-10</strain>
    </source>
</reference>
<protein>
    <recommendedName>
        <fullName evidence="1">Glycine dehydrogenase (decarboxylating)</fullName>
        <ecNumber evidence="1">1.4.4.2</ecNumber>
    </recommendedName>
    <alternativeName>
        <fullName evidence="1">Glycine cleavage system P-protein</fullName>
    </alternativeName>
    <alternativeName>
        <fullName evidence="1">Glycine decarboxylase</fullName>
    </alternativeName>
    <alternativeName>
        <fullName evidence="1">Glycine dehydrogenase (aminomethyl-transferring)</fullName>
    </alternativeName>
</protein>
<feature type="chain" id="PRO_1000045626" description="Glycine dehydrogenase (decarboxylating)">
    <location>
        <begin position="1"/>
        <end position="954"/>
    </location>
</feature>
<feature type="modified residue" description="N6-(pyridoxal phosphate)lysine" evidence="1">
    <location>
        <position position="702"/>
    </location>
</feature>